<reference evidence="4" key="1">
    <citation type="journal article" date="2012" name="Mol. Ecol.">
        <title>Whole transcriptome analysis of the coral Acropora millepora reveals complex responses to CO(2)-driven acidification during the initiation of calcification.</title>
        <authorList>
            <person name="Moya A."/>
            <person name="Huisman L."/>
            <person name="Ball E.E."/>
            <person name="Hayward D.C."/>
            <person name="Grasso L.C."/>
            <person name="Chua C.M."/>
            <person name="Woo H.N."/>
            <person name="Gattuso J.P."/>
            <person name="Foret S."/>
            <person name="Miller D.J."/>
        </authorList>
    </citation>
    <scope>NUCLEOTIDE SEQUENCE [MRNA]</scope>
</reference>
<reference evidence="4" key="2">
    <citation type="journal article" date="2013" name="Mol. Biol. Evol.">
        <title>The skeletal proteome of the coral Acropora millepora: the evolution of calcification by co-option and domain shuffling.</title>
        <authorList>
            <person name="Ramos-Silva P."/>
            <person name="Kaandorp J."/>
            <person name="Huisman L."/>
            <person name="Marie B."/>
            <person name="Zanella-Cleon I."/>
            <person name="Guichard N."/>
            <person name="Miller D.J."/>
            <person name="Marin F."/>
        </authorList>
    </citation>
    <scope>PROTEIN SEQUENCE OF 201-211 AND 368-382</scope>
    <scope>TISSUE SPECIFICITY</scope>
    <scope>IDENTIFICATION BY MASS SPECTROMETRY</scope>
</reference>
<feature type="signal peptide" evidence="1">
    <location>
        <begin position="1"/>
        <end position="23"/>
    </location>
</feature>
<feature type="chain" id="PRO_0000429761" description="Uncharacterized skeletal organic matrix protein 7" evidence="1">
    <location>
        <begin position="24"/>
        <end position="422"/>
    </location>
</feature>
<comment type="subcellular location">
    <subcellularLocation>
        <location evidence="5">Secreted</location>
    </subcellularLocation>
</comment>
<comment type="tissue specificity">
    <text evidence="2">Component of the acid-insoluble organic matrix of the aragonitic skeleton (at protein level).</text>
</comment>
<organism>
    <name type="scientific">Acropora millepora</name>
    <name type="common">Staghorn coral</name>
    <name type="synonym">Heteropora millepora</name>
    <dbReference type="NCBI Taxonomy" id="45264"/>
    <lineage>
        <taxon>Eukaryota</taxon>
        <taxon>Metazoa</taxon>
        <taxon>Cnidaria</taxon>
        <taxon>Anthozoa</taxon>
        <taxon>Hexacorallia</taxon>
        <taxon>Scleractinia</taxon>
        <taxon>Astrocoeniina</taxon>
        <taxon>Acroporidae</taxon>
        <taxon>Acropora</taxon>
    </lineage>
</organism>
<dbReference type="EMBL" id="JR998260">
    <property type="status" value="NOT_ANNOTATED_CDS"/>
    <property type="molecule type" value="mRNA"/>
</dbReference>
<dbReference type="EMBL" id="JT009312">
    <property type="status" value="NOT_ANNOTATED_CDS"/>
    <property type="molecule type" value="mRNA"/>
</dbReference>
<dbReference type="EMBL" id="JT013858">
    <property type="status" value="NOT_ANNOTATED_CDS"/>
    <property type="molecule type" value="mRNA"/>
</dbReference>
<dbReference type="EMBL" id="JT021838">
    <property type="status" value="NOT_ANNOTATED_CDS"/>
    <property type="molecule type" value="mRNA"/>
</dbReference>
<dbReference type="OrthoDB" id="5947072at2759"/>
<dbReference type="GO" id="GO:0005576">
    <property type="term" value="C:extracellular region"/>
    <property type="evidence" value="ECO:0007669"/>
    <property type="project" value="UniProtKB-SubCell"/>
</dbReference>
<dbReference type="Gene3D" id="2.60.120.560">
    <property type="entry name" value="Exo-inulinase, domain 1"/>
    <property type="match status" value="1"/>
</dbReference>
<accession>B8WI85</accession>
<sequence>MLSLIPFTVCAFLALITSKGGSATPSTISLECSENDVCAALETLTRRQDRLQKTLNLCTDDESQFTLTAVVKCTSVIQVPFPNRHFKMAALDLSSGICRALAQPVVASQAYTVSAEILNEAGWKGVNSGHPGLLFNAIDENNFDFVYLRPHSVSGCYQTGYMSAGVNKFVESKRCPNGPPKGGEWFPFSVTVNGQYATVYRSGVLVTTFKTHFASSRARGGVFIFNGYKNVILFRKFKTAPKHFFSKRCKEVVEFPAGYVKMDAGIGSWPKDAFCQVEFGSDGRIASYELKVDLYNFIGRDKANLGHPGVFFNAEDEDNYDFVYFRPHSVGGCFQTGYLLKGKPRFDGAKSASCPKGPPKGKTWFNVKLTVSNATPAGEVRVYLDDTLVTSFNPRYPIKRRGGVLVANGYKNVIYLRNFKIL</sequence>
<keyword id="KW-0903">Direct protein sequencing</keyword>
<keyword id="KW-0964">Secreted</keyword>
<keyword id="KW-0732">Signal</keyword>
<evidence type="ECO:0000255" key="1"/>
<evidence type="ECO:0000269" key="2">
    <source>
    </source>
</evidence>
<evidence type="ECO:0000303" key="3">
    <source>
    </source>
</evidence>
<evidence type="ECO:0000305" key="4"/>
<evidence type="ECO:0000305" key="5">
    <source>
    </source>
</evidence>
<protein>
    <recommendedName>
        <fullName evidence="3">Uncharacterized skeletal organic matrix protein 7</fullName>
        <shortName evidence="3">Uncharacterized SOMP-7</shortName>
    </recommendedName>
</protein>
<proteinExistence type="evidence at protein level"/>
<name>USOM7_ACRMI</name>